<comment type="function">
    <text evidence="1">Required for rescue of stalled ribosomes mediated by trans-translation. Binds to transfer-messenger RNA (tmRNA), required for stable association of tmRNA with ribosomes. tmRNA and SmpB together mimic tRNA shape, replacing the anticodon stem-loop with SmpB. tmRNA is encoded by the ssrA gene; the 2 termini fold to resemble tRNA(Ala) and it encodes a 'tag peptide', a short internal open reading frame. During trans-translation Ala-aminoacylated tmRNA acts like a tRNA, entering the A-site of stalled ribosomes, displacing the stalled mRNA. The ribosome then switches to translate the ORF on the tmRNA; the nascent peptide is terminated with the 'tag peptide' encoded by the tmRNA and targeted for degradation. The ribosome is freed to recommence translation, which seems to be the essential function of trans-translation.</text>
</comment>
<comment type="subcellular location">
    <subcellularLocation>
        <location evidence="1">Cytoplasm</location>
    </subcellularLocation>
    <text evidence="1">The tmRNA-SmpB complex associates with stalled 70S ribosomes.</text>
</comment>
<comment type="similarity">
    <text evidence="1">Belongs to the SmpB family.</text>
</comment>
<protein>
    <recommendedName>
        <fullName evidence="1">SsrA-binding protein</fullName>
    </recommendedName>
    <alternativeName>
        <fullName evidence="1">Small protein B</fullName>
    </alternativeName>
</protein>
<name>SSRP_RHIME</name>
<reference key="1">
    <citation type="journal article" date="2001" name="Proc. Natl. Acad. Sci. U.S.A.">
        <title>Analysis of the chromosome sequence of the legume symbiont Sinorhizobium meliloti strain 1021.</title>
        <authorList>
            <person name="Capela D."/>
            <person name="Barloy-Hubler F."/>
            <person name="Gouzy J."/>
            <person name="Bothe G."/>
            <person name="Ampe F."/>
            <person name="Batut J."/>
            <person name="Boistard P."/>
            <person name="Becker A."/>
            <person name="Boutry M."/>
            <person name="Cadieu E."/>
            <person name="Dreano S."/>
            <person name="Gloux S."/>
            <person name="Godrie T."/>
            <person name="Goffeau A."/>
            <person name="Kahn D."/>
            <person name="Kiss E."/>
            <person name="Lelaure V."/>
            <person name="Masuy D."/>
            <person name="Pohl T."/>
            <person name="Portetelle D."/>
            <person name="Puehler A."/>
            <person name="Purnelle B."/>
            <person name="Ramsperger U."/>
            <person name="Renard C."/>
            <person name="Thebault P."/>
            <person name="Vandenbol M."/>
            <person name="Weidner S."/>
            <person name="Galibert F."/>
        </authorList>
    </citation>
    <scope>NUCLEOTIDE SEQUENCE [LARGE SCALE GENOMIC DNA]</scope>
    <source>
        <strain>1021</strain>
    </source>
</reference>
<reference key="2">
    <citation type="journal article" date="2001" name="Science">
        <title>The composite genome of the legume symbiont Sinorhizobium meliloti.</title>
        <authorList>
            <person name="Galibert F."/>
            <person name="Finan T.M."/>
            <person name="Long S.R."/>
            <person name="Puehler A."/>
            <person name="Abola P."/>
            <person name="Ampe F."/>
            <person name="Barloy-Hubler F."/>
            <person name="Barnett M.J."/>
            <person name="Becker A."/>
            <person name="Boistard P."/>
            <person name="Bothe G."/>
            <person name="Boutry M."/>
            <person name="Bowser L."/>
            <person name="Buhrmester J."/>
            <person name="Cadieu E."/>
            <person name="Capela D."/>
            <person name="Chain P."/>
            <person name="Cowie A."/>
            <person name="Davis R.W."/>
            <person name="Dreano S."/>
            <person name="Federspiel N.A."/>
            <person name="Fisher R.F."/>
            <person name="Gloux S."/>
            <person name="Godrie T."/>
            <person name="Goffeau A."/>
            <person name="Golding B."/>
            <person name="Gouzy J."/>
            <person name="Gurjal M."/>
            <person name="Hernandez-Lucas I."/>
            <person name="Hong A."/>
            <person name="Huizar L."/>
            <person name="Hyman R.W."/>
            <person name="Jones T."/>
            <person name="Kahn D."/>
            <person name="Kahn M.L."/>
            <person name="Kalman S."/>
            <person name="Keating D.H."/>
            <person name="Kiss E."/>
            <person name="Komp C."/>
            <person name="Lelaure V."/>
            <person name="Masuy D."/>
            <person name="Palm C."/>
            <person name="Peck M.C."/>
            <person name="Pohl T.M."/>
            <person name="Portetelle D."/>
            <person name="Purnelle B."/>
            <person name="Ramsperger U."/>
            <person name="Surzycki R."/>
            <person name="Thebault P."/>
            <person name="Vandenbol M."/>
            <person name="Vorhoelter F.J."/>
            <person name="Weidner S."/>
            <person name="Wells D.H."/>
            <person name="Wong K."/>
            <person name="Yeh K.-C."/>
            <person name="Batut J."/>
        </authorList>
    </citation>
    <scope>NUCLEOTIDE SEQUENCE [LARGE SCALE GENOMIC DNA]</scope>
    <source>
        <strain>1021</strain>
    </source>
</reference>
<proteinExistence type="inferred from homology"/>
<evidence type="ECO:0000255" key="1">
    <source>
        <dbReference type="HAMAP-Rule" id="MF_00023"/>
    </source>
</evidence>
<evidence type="ECO:0000256" key="2">
    <source>
        <dbReference type="SAM" id="MobiDB-lite"/>
    </source>
</evidence>
<organism>
    <name type="scientific">Rhizobium meliloti (strain 1021)</name>
    <name type="common">Ensifer meliloti</name>
    <name type="synonym">Sinorhizobium meliloti</name>
    <dbReference type="NCBI Taxonomy" id="266834"/>
    <lineage>
        <taxon>Bacteria</taxon>
        <taxon>Pseudomonadati</taxon>
        <taxon>Pseudomonadota</taxon>
        <taxon>Alphaproteobacteria</taxon>
        <taxon>Hyphomicrobiales</taxon>
        <taxon>Rhizobiaceae</taxon>
        <taxon>Sinorhizobium/Ensifer group</taxon>
        <taxon>Sinorhizobium</taxon>
    </lineage>
</organism>
<dbReference type="EMBL" id="AL591688">
    <property type="protein sequence ID" value="CAC45639.1"/>
    <property type="molecule type" value="Genomic_DNA"/>
</dbReference>
<dbReference type="RefSeq" id="NP_385166.1">
    <property type="nucleotide sequence ID" value="NC_003047.1"/>
</dbReference>
<dbReference type="RefSeq" id="WP_010969015.1">
    <property type="nucleotide sequence ID" value="NC_003047.1"/>
</dbReference>
<dbReference type="SMR" id="Q92R54"/>
<dbReference type="EnsemblBacteria" id="CAC45639">
    <property type="protein sequence ID" value="CAC45639"/>
    <property type="gene ID" value="SMc02405"/>
</dbReference>
<dbReference type="KEGG" id="sme:SMc02405"/>
<dbReference type="PATRIC" id="fig|266834.11.peg.2467"/>
<dbReference type="eggNOG" id="COG0691">
    <property type="taxonomic scope" value="Bacteria"/>
</dbReference>
<dbReference type="HOGENOM" id="CLU_108953_0_1_5"/>
<dbReference type="OrthoDB" id="9805462at2"/>
<dbReference type="Proteomes" id="UP000001976">
    <property type="component" value="Chromosome"/>
</dbReference>
<dbReference type="GO" id="GO:0005829">
    <property type="term" value="C:cytosol"/>
    <property type="evidence" value="ECO:0007669"/>
    <property type="project" value="TreeGrafter"/>
</dbReference>
<dbReference type="GO" id="GO:0003723">
    <property type="term" value="F:RNA binding"/>
    <property type="evidence" value="ECO:0007669"/>
    <property type="project" value="UniProtKB-UniRule"/>
</dbReference>
<dbReference type="GO" id="GO:0070929">
    <property type="term" value="P:trans-translation"/>
    <property type="evidence" value="ECO:0007669"/>
    <property type="project" value="UniProtKB-UniRule"/>
</dbReference>
<dbReference type="CDD" id="cd09294">
    <property type="entry name" value="SmpB"/>
    <property type="match status" value="1"/>
</dbReference>
<dbReference type="Gene3D" id="2.40.280.10">
    <property type="match status" value="1"/>
</dbReference>
<dbReference type="HAMAP" id="MF_00023">
    <property type="entry name" value="SmpB"/>
    <property type="match status" value="1"/>
</dbReference>
<dbReference type="InterPro" id="IPR023620">
    <property type="entry name" value="SmpB"/>
</dbReference>
<dbReference type="InterPro" id="IPR000037">
    <property type="entry name" value="SsrA-bd_prot"/>
</dbReference>
<dbReference type="InterPro" id="IPR020081">
    <property type="entry name" value="SsrA-bd_prot_CS"/>
</dbReference>
<dbReference type="NCBIfam" id="NF003843">
    <property type="entry name" value="PRK05422.1"/>
    <property type="match status" value="1"/>
</dbReference>
<dbReference type="NCBIfam" id="TIGR00086">
    <property type="entry name" value="smpB"/>
    <property type="match status" value="1"/>
</dbReference>
<dbReference type="PANTHER" id="PTHR30308:SF2">
    <property type="entry name" value="SSRA-BINDING PROTEIN"/>
    <property type="match status" value="1"/>
</dbReference>
<dbReference type="PANTHER" id="PTHR30308">
    <property type="entry name" value="TMRNA-BINDING COMPONENT OF TRANS-TRANSLATION TAGGING COMPLEX"/>
    <property type="match status" value="1"/>
</dbReference>
<dbReference type="Pfam" id="PF01668">
    <property type="entry name" value="SmpB"/>
    <property type="match status" value="1"/>
</dbReference>
<dbReference type="SUPFAM" id="SSF74982">
    <property type="entry name" value="Small protein B (SmpB)"/>
    <property type="match status" value="1"/>
</dbReference>
<dbReference type="PROSITE" id="PS01317">
    <property type="entry name" value="SSRP"/>
    <property type="match status" value="1"/>
</dbReference>
<sequence>MAPKGSERTVKKVVAENRKARFNYEIVDTYEAGLVLTGTEVKSLREGKANIAESYATDEGGEIWLINSYLPEYLQANRFNHETRRRRKLLLSKREVNRLQGAVNREGMSLIPLRIYFNERGRVKLELALGKGKKLHDKRETSKERDWNRQKNRLLKERG</sequence>
<gene>
    <name evidence="1" type="primary">smpB</name>
    <name type="ordered locus">R01060</name>
    <name type="ORF">SMc02405</name>
</gene>
<feature type="chain" id="PRO_0000103013" description="SsrA-binding protein">
    <location>
        <begin position="1"/>
        <end position="159"/>
    </location>
</feature>
<feature type="region of interest" description="Disordered" evidence="2">
    <location>
        <begin position="134"/>
        <end position="159"/>
    </location>
</feature>
<feature type="compositionally biased region" description="Basic and acidic residues" evidence="2">
    <location>
        <begin position="137"/>
        <end position="159"/>
    </location>
</feature>
<accession>Q92R54</accession>
<keyword id="KW-0963">Cytoplasm</keyword>
<keyword id="KW-1185">Reference proteome</keyword>
<keyword id="KW-0694">RNA-binding</keyword>